<protein>
    <recommendedName>
        <fullName evidence="7">Orexin/Hypocretin receptor type 1</fullName>
    </recommendedName>
    <alternativeName>
        <fullName evidence="9">Hypocretin receptor type 1</fullName>
    </alternativeName>
    <alternativeName>
        <fullName evidence="8">Orexin receptor type 1</fullName>
        <shortName>Ox-1-R</shortName>
        <shortName>Ox1-R</shortName>
        <shortName>Ox1R</shortName>
    </alternativeName>
</protein>
<feature type="chain" id="PRO_0000069985" description="Orexin/Hypocretin receptor type 1">
    <location>
        <begin position="1"/>
        <end position="416"/>
    </location>
</feature>
<feature type="topological domain" description="Extracellular" evidence="1">
    <location>
        <begin position="1"/>
        <end position="46"/>
    </location>
</feature>
<feature type="transmembrane region" description="Helical; Name=1" evidence="1">
    <location>
        <begin position="47"/>
        <end position="67"/>
    </location>
</feature>
<feature type="topological domain" description="Cytoplasmic" evidence="1">
    <location>
        <begin position="68"/>
        <end position="82"/>
    </location>
</feature>
<feature type="transmembrane region" description="Helical; Name=2" evidence="1">
    <location>
        <begin position="83"/>
        <end position="105"/>
    </location>
</feature>
<feature type="topological domain" description="Extracellular" evidence="1">
    <location>
        <begin position="106"/>
        <end position="119"/>
    </location>
</feature>
<feature type="transmembrane region" description="Helical; Name=3" evidence="2">
    <location>
        <begin position="120"/>
        <end position="140"/>
    </location>
</feature>
<feature type="topological domain" description="Cytoplasmic" evidence="1">
    <location>
        <begin position="141"/>
        <end position="160"/>
    </location>
</feature>
<feature type="transmembrane region" description="Helical; Name=4" evidence="1">
    <location>
        <begin position="161"/>
        <end position="182"/>
    </location>
</feature>
<feature type="topological domain" description="Extracellular" evidence="1">
    <location>
        <begin position="183"/>
        <end position="213"/>
    </location>
</feature>
<feature type="transmembrane region" description="Helical; Name=5" evidence="1">
    <location>
        <begin position="214"/>
        <end position="235"/>
    </location>
</feature>
<feature type="topological domain" description="Cytoplasmic" evidence="1">
    <location>
        <begin position="236"/>
        <end position="298"/>
    </location>
</feature>
<feature type="transmembrane region" description="Helical; Name=6" evidence="1">
    <location>
        <begin position="299"/>
        <end position="321"/>
    </location>
</feature>
<feature type="topological domain" description="Extracellular" evidence="1">
    <location>
        <begin position="322"/>
        <end position="336"/>
    </location>
</feature>
<feature type="transmembrane region" description="Helical; Name=7" evidence="1">
    <location>
        <begin position="337"/>
        <end position="360"/>
    </location>
</feature>
<feature type="topological domain" description="Cytoplasmic" evidence="1">
    <location>
        <begin position="361"/>
        <end position="416"/>
    </location>
</feature>
<feature type="region of interest" description="Disordered" evidence="4">
    <location>
        <begin position="1"/>
        <end position="22"/>
    </location>
</feature>
<feature type="region of interest" description="Required for response to orexin-A" evidence="1">
    <location>
        <begin position="26"/>
        <end position="41"/>
    </location>
</feature>
<feature type="site" description="Important for responses to orexin" evidence="1">
    <location>
        <position position="36"/>
    </location>
</feature>
<feature type="glycosylation site" description="N-linked (GlcNAc...) asparagine" evidence="2">
    <location>
        <position position="194"/>
    </location>
</feature>
<feature type="disulfide bond" evidence="1">
    <location>
        <begin position="119"/>
        <end position="202"/>
    </location>
</feature>
<feature type="sequence conflict" description="In Ref. 5; AAK71326." evidence="6" ref="5">
    <original>F</original>
    <variation>V</variation>
    <location>
        <position position="139"/>
    </location>
</feature>
<feature type="sequence conflict" description="In Ref. 1; AAR01326, 5; AAK71326 and 6; AAO85111." evidence="6" ref="1 5 6">
    <original>A</original>
    <variation>G</variation>
    <location>
        <position position="232"/>
    </location>
</feature>
<gene>
    <name evidence="9" type="primary">Hcrtr1</name>
</gene>
<dbReference type="EMBL" id="AY336083">
    <property type="protein sequence ID" value="AAR01326.1"/>
    <property type="molecule type" value="mRNA"/>
</dbReference>
<dbReference type="EMBL" id="AK140137">
    <property type="protein sequence ID" value="BAE24252.1"/>
    <property type="molecule type" value="mRNA"/>
</dbReference>
<dbReference type="EMBL" id="AL606925">
    <property type="status" value="NOT_ANNOTATED_CDS"/>
    <property type="molecule type" value="Genomic_DNA"/>
</dbReference>
<dbReference type="EMBL" id="CU207372">
    <property type="status" value="NOT_ANNOTATED_CDS"/>
    <property type="molecule type" value="Genomic_DNA"/>
</dbReference>
<dbReference type="EMBL" id="CU210846">
    <property type="status" value="NOT_ANNOTATED_CDS"/>
    <property type="molecule type" value="Genomic_DNA"/>
</dbReference>
<dbReference type="EMBL" id="BC119583">
    <property type="protein sequence ID" value="AAI19584.1"/>
    <property type="molecule type" value="mRNA"/>
</dbReference>
<dbReference type="EMBL" id="AF394596">
    <property type="protein sequence ID" value="AAK71326.1"/>
    <property type="molecule type" value="mRNA"/>
</dbReference>
<dbReference type="EMBL" id="AY255599">
    <property type="protein sequence ID" value="AAO85111.1"/>
    <property type="molecule type" value="mRNA"/>
</dbReference>
<dbReference type="CCDS" id="CCDS18707.1"/>
<dbReference type="RefSeq" id="NP_001156499.1">
    <property type="nucleotide sequence ID" value="NM_001163027.2"/>
</dbReference>
<dbReference type="RefSeq" id="NP_001412998.1">
    <property type="nucleotide sequence ID" value="NM_001426069.1"/>
</dbReference>
<dbReference type="RefSeq" id="NP_945197.2">
    <property type="nucleotide sequence ID" value="NM_198959.3"/>
</dbReference>
<dbReference type="RefSeq" id="XP_017175645.1">
    <property type="nucleotide sequence ID" value="XM_017320156.1"/>
</dbReference>
<dbReference type="RefSeq" id="XP_017175646.1">
    <property type="nucleotide sequence ID" value="XM_017320157.3"/>
</dbReference>
<dbReference type="RefSeq" id="XP_036019953.1">
    <property type="nucleotide sequence ID" value="XM_036164060.1"/>
</dbReference>
<dbReference type="SMR" id="P58307"/>
<dbReference type="FunCoup" id="P58307">
    <property type="interactions" value="658"/>
</dbReference>
<dbReference type="STRING" id="10090.ENSMUSP00000112630"/>
<dbReference type="BindingDB" id="P58307"/>
<dbReference type="ChEMBL" id="CHEMBL2434819"/>
<dbReference type="DrugCentral" id="P58307"/>
<dbReference type="GuidetoPHARMACOLOGY" id="321"/>
<dbReference type="GlyCosmos" id="P58307">
    <property type="glycosylation" value="1 site, No reported glycans"/>
</dbReference>
<dbReference type="GlyGen" id="P58307">
    <property type="glycosylation" value="2 sites"/>
</dbReference>
<dbReference type="iPTMnet" id="P58307"/>
<dbReference type="PhosphoSitePlus" id="P58307"/>
<dbReference type="PaxDb" id="10090-ENSMUSP00000112630"/>
<dbReference type="ProteomicsDB" id="295492"/>
<dbReference type="Antibodypedia" id="2934">
    <property type="antibodies" value="405 antibodies from 38 providers"/>
</dbReference>
<dbReference type="DNASU" id="230777"/>
<dbReference type="Ensembl" id="ENSMUST00000030562.13">
    <property type="protein sequence ID" value="ENSMUSP00000030562.7"/>
    <property type="gene ID" value="ENSMUSG00000028778.16"/>
</dbReference>
<dbReference type="Ensembl" id="ENSMUST00000119423.8">
    <property type="protein sequence ID" value="ENSMUSP00000112630.2"/>
    <property type="gene ID" value="ENSMUSG00000028778.16"/>
</dbReference>
<dbReference type="Ensembl" id="ENSMUST00000120154.9">
    <property type="protein sequence ID" value="ENSMUSP00000113198.3"/>
    <property type="gene ID" value="ENSMUSG00000028778.16"/>
</dbReference>
<dbReference type="Ensembl" id="ENSMUST00000164887.3">
    <property type="protein sequence ID" value="ENSMUSP00000127290.3"/>
    <property type="gene ID" value="ENSMUSG00000028778.16"/>
</dbReference>
<dbReference type="GeneID" id="230777"/>
<dbReference type="KEGG" id="mmu:230777"/>
<dbReference type="UCSC" id="uc008uyx.1">
    <property type="organism name" value="mouse"/>
</dbReference>
<dbReference type="AGR" id="MGI:2385650"/>
<dbReference type="CTD" id="3061"/>
<dbReference type="MGI" id="MGI:2385650">
    <property type="gene designation" value="Hcrtr1"/>
</dbReference>
<dbReference type="VEuPathDB" id="HostDB:ENSMUSG00000028778"/>
<dbReference type="eggNOG" id="KOG3656">
    <property type="taxonomic scope" value="Eukaryota"/>
</dbReference>
<dbReference type="GeneTree" id="ENSGT01130000278294"/>
<dbReference type="HOGENOM" id="CLU_009579_6_3_1"/>
<dbReference type="InParanoid" id="P58307"/>
<dbReference type="OMA" id="HTLCKVI"/>
<dbReference type="OrthoDB" id="9986530at2759"/>
<dbReference type="PhylomeDB" id="P58307"/>
<dbReference type="TreeFam" id="TF315303"/>
<dbReference type="Reactome" id="R-MMU-389397">
    <property type="pathway name" value="Orexin and neuropeptides FF and QRFP bind to their respective receptors"/>
</dbReference>
<dbReference type="Reactome" id="R-MMU-416476">
    <property type="pathway name" value="G alpha (q) signalling events"/>
</dbReference>
<dbReference type="BioGRID-ORCS" id="230777">
    <property type="hits" value="2 hits in 76 CRISPR screens"/>
</dbReference>
<dbReference type="ChiTaRS" id="Hcrtr1">
    <property type="organism name" value="mouse"/>
</dbReference>
<dbReference type="PRO" id="PR:P58307"/>
<dbReference type="Proteomes" id="UP000000589">
    <property type="component" value="Chromosome 4"/>
</dbReference>
<dbReference type="RNAct" id="P58307">
    <property type="molecule type" value="protein"/>
</dbReference>
<dbReference type="Bgee" id="ENSMUSG00000028778">
    <property type="expression patterns" value="Expressed in substantia nigra and 30 other cell types or tissues"/>
</dbReference>
<dbReference type="GO" id="GO:0005886">
    <property type="term" value="C:plasma membrane"/>
    <property type="evidence" value="ECO:0000250"/>
    <property type="project" value="UniProtKB"/>
</dbReference>
<dbReference type="GO" id="GO:0016499">
    <property type="term" value="F:orexin receptor activity"/>
    <property type="evidence" value="ECO:0000250"/>
    <property type="project" value="UniProtKB"/>
</dbReference>
<dbReference type="GO" id="GO:0017046">
    <property type="term" value="F:peptide hormone binding"/>
    <property type="evidence" value="ECO:0007669"/>
    <property type="project" value="Ensembl"/>
</dbReference>
<dbReference type="GO" id="GO:0007631">
    <property type="term" value="P:feeding behavior"/>
    <property type="evidence" value="ECO:0007669"/>
    <property type="project" value="InterPro"/>
</dbReference>
<dbReference type="GO" id="GO:0007218">
    <property type="term" value="P:neuropeptide signaling pathway"/>
    <property type="evidence" value="ECO:0000250"/>
    <property type="project" value="UniProtKB"/>
</dbReference>
<dbReference type="GO" id="GO:0070374">
    <property type="term" value="P:positive regulation of ERK1 and ERK2 cascade"/>
    <property type="evidence" value="ECO:0000314"/>
    <property type="project" value="MGI"/>
</dbReference>
<dbReference type="GO" id="GO:0051480">
    <property type="term" value="P:regulation of cytosolic calcium ion concentration"/>
    <property type="evidence" value="ECO:0000250"/>
    <property type="project" value="UniProtKB"/>
</dbReference>
<dbReference type="CDD" id="cd15208">
    <property type="entry name" value="7tmA_OXR"/>
    <property type="match status" value="1"/>
</dbReference>
<dbReference type="FunFam" id="1.20.1070.10:FF:000075">
    <property type="entry name" value="orexin receptor type 2"/>
    <property type="match status" value="1"/>
</dbReference>
<dbReference type="Gene3D" id="1.20.1070.10">
    <property type="entry name" value="Rhodopsin 7-helix transmembrane proteins"/>
    <property type="match status" value="1"/>
</dbReference>
<dbReference type="InterPro" id="IPR000276">
    <property type="entry name" value="GPCR_Rhodpsn"/>
</dbReference>
<dbReference type="InterPro" id="IPR017452">
    <property type="entry name" value="GPCR_Rhodpsn_7TM"/>
</dbReference>
<dbReference type="InterPro" id="IPR000204">
    <property type="entry name" value="Orexin_rcpt"/>
</dbReference>
<dbReference type="InterPro" id="IPR004059">
    <property type="entry name" value="OX1R"/>
</dbReference>
<dbReference type="PANTHER" id="PTHR45695:SF32">
    <property type="entry name" value="G PROTEIN-COUPLED RECEPTOR 15-LIKE"/>
    <property type="match status" value="1"/>
</dbReference>
<dbReference type="PANTHER" id="PTHR45695">
    <property type="entry name" value="LEUCOKININ RECEPTOR-RELATED"/>
    <property type="match status" value="1"/>
</dbReference>
<dbReference type="Pfam" id="PF00001">
    <property type="entry name" value="7tm_1"/>
    <property type="match status" value="1"/>
</dbReference>
<dbReference type="PRINTS" id="PR00237">
    <property type="entry name" value="GPCRRHODOPSN"/>
</dbReference>
<dbReference type="PRINTS" id="PR01521">
    <property type="entry name" value="OREXIN1R"/>
</dbReference>
<dbReference type="PRINTS" id="PR01064">
    <property type="entry name" value="OREXINR"/>
</dbReference>
<dbReference type="SMART" id="SM01381">
    <property type="entry name" value="7TM_GPCR_Srsx"/>
    <property type="match status" value="1"/>
</dbReference>
<dbReference type="SUPFAM" id="SSF81321">
    <property type="entry name" value="Family A G protein-coupled receptor-like"/>
    <property type="match status" value="1"/>
</dbReference>
<dbReference type="PROSITE" id="PS00237">
    <property type="entry name" value="G_PROTEIN_RECEP_F1_1"/>
    <property type="match status" value="1"/>
</dbReference>
<dbReference type="PROSITE" id="PS50262">
    <property type="entry name" value="G_PROTEIN_RECEP_F1_2"/>
    <property type="match status" value="1"/>
</dbReference>
<reference key="1">
    <citation type="journal article" date="2004" name="Mol. Endocrinol.">
        <title>Genomic organization of mouse orexin receptors: characterization of two novel tissue-specific splice variants.</title>
        <authorList>
            <person name="Chen J."/>
            <person name="Randeva H.S."/>
        </authorList>
    </citation>
    <scope>NUCLEOTIDE SEQUENCE [MRNA]</scope>
    <scope>TISSUE SPECIFICITY</scope>
    <source>
        <strain>BALB/cJ</strain>
        <tissue>Brain</tissue>
    </source>
</reference>
<reference key="2">
    <citation type="journal article" date="2005" name="Science">
        <title>The transcriptional landscape of the mammalian genome.</title>
        <authorList>
            <person name="Carninci P."/>
            <person name="Kasukawa T."/>
            <person name="Katayama S."/>
            <person name="Gough J."/>
            <person name="Frith M.C."/>
            <person name="Maeda N."/>
            <person name="Oyama R."/>
            <person name="Ravasi T."/>
            <person name="Lenhard B."/>
            <person name="Wells C."/>
            <person name="Kodzius R."/>
            <person name="Shimokawa K."/>
            <person name="Bajic V.B."/>
            <person name="Brenner S.E."/>
            <person name="Batalov S."/>
            <person name="Forrest A.R."/>
            <person name="Zavolan M."/>
            <person name="Davis M.J."/>
            <person name="Wilming L.G."/>
            <person name="Aidinis V."/>
            <person name="Allen J.E."/>
            <person name="Ambesi-Impiombato A."/>
            <person name="Apweiler R."/>
            <person name="Aturaliya R.N."/>
            <person name="Bailey T.L."/>
            <person name="Bansal M."/>
            <person name="Baxter L."/>
            <person name="Beisel K.W."/>
            <person name="Bersano T."/>
            <person name="Bono H."/>
            <person name="Chalk A.M."/>
            <person name="Chiu K.P."/>
            <person name="Choudhary V."/>
            <person name="Christoffels A."/>
            <person name="Clutterbuck D.R."/>
            <person name="Crowe M.L."/>
            <person name="Dalla E."/>
            <person name="Dalrymple B.P."/>
            <person name="de Bono B."/>
            <person name="Della Gatta G."/>
            <person name="di Bernardo D."/>
            <person name="Down T."/>
            <person name="Engstrom P."/>
            <person name="Fagiolini M."/>
            <person name="Faulkner G."/>
            <person name="Fletcher C.F."/>
            <person name="Fukushima T."/>
            <person name="Furuno M."/>
            <person name="Futaki S."/>
            <person name="Gariboldi M."/>
            <person name="Georgii-Hemming P."/>
            <person name="Gingeras T.R."/>
            <person name="Gojobori T."/>
            <person name="Green R.E."/>
            <person name="Gustincich S."/>
            <person name="Harbers M."/>
            <person name="Hayashi Y."/>
            <person name="Hensch T.K."/>
            <person name="Hirokawa N."/>
            <person name="Hill D."/>
            <person name="Huminiecki L."/>
            <person name="Iacono M."/>
            <person name="Ikeo K."/>
            <person name="Iwama A."/>
            <person name="Ishikawa T."/>
            <person name="Jakt M."/>
            <person name="Kanapin A."/>
            <person name="Katoh M."/>
            <person name="Kawasawa Y."/>
            <person name="Kelso J."/>
            <person name="Kitamura H."/>
            <person name="Kitano H."/>
            <person name="Kollias G."/>
            <person name="Krishnan S.P."/>
            <person name="Kruger A."/>
            <person name="Kummerfeld S.K."/>
            <person name="Kurochkin I.V."/>
            <person name="Lareau L.F."/>
            <person name="Lazarevic D."/>
            <person name="Lipovich L."/>
            <person name="Liu J."/>
            <person name="Liuni S."/>
            <person name="McWilliam S."/>
            <person name="Madan Babu M."/>
            <person name="Madera M."/>
            <person name="Marchionni L."/>
            <person name="Matsuda H."/>
            <person name="Matsuzawa S."/>
            <person name="Miki H."/>
            <person name="Mignone F."/>
            <person name="Miyake S."/>
            <person name="Morris K."/>
            <person name="Mottagui-Tabar S."/>
            <person name="Mulder N."/>
            <person name="Nakano N."/>
            <person name="Nakauchi H."/>
            <person name="Ng P."/>
            <person name="Nilsson R."/>
            <person name="Nishiguchi S."/>
            <person name="Nishikawa S."/>
            <person name="Nori F."/>
            <person name="Ohara O."/>
            <person name="Okazaki Y."/>
            <person name="Orlando V."/>
            <person name="Pang K.C."/>
            <person name="Pavan W.J."/>
            <person name="Pavesi G."/>
            <person name="Pesole G."/>
            <person name="Petrovsky N."/>
            <person name="Piazza S."/>
            <person name="Reed J."/>
            <person name="Reid J.F."/>
            <person name="Ring B.Z."/>
            <person name="Ringwald M."/>
            <person name="Rost B."/>
            <person name="Ruan Y."/>
            <person name="Salzberg S.L."/>
            <person name="Sandelin A."/>
            <person name="Schneider C."/>
            <person name="Schoenbach C."/>
            <person name="Sekiguchi K."/>
            <person name="Semple C.A."/>
            <person name="Seno S."/>
            <person name="Sessa L."/>
            <person name="Sheng Y."/>
            <person name="Shibata Y."/>
            <person name="Shimada H."/>
            <person name="Shimada K."/>
            <person name="Silva D."/>
            <person name="Sinclair B."/>
            <person name="Sperling S."/>
            <person name="Stupka E."/>
            <person name="Sugiura K."/>
            <person name="Sultana R."/>
            <person name="Takenaka Y."/>
            <person name="Taki K."/>
            <person name="Tammoja K."/>
            <person name="Tan S.L."/>
            <person name="Tang S."/>
            <person name="Taylor M.S."/>
            <person name="Tegner J."/>
            <person name="Teichmann S.A."/>
            <person name="Ueda H.R."/>
            <person name="van Nimwegen E."/>
            <person name="Verardo R."/>
            <person name="Wei C.L."/>
            <person name="Yagi K."/>
            <person name="Yamanishi H."/>
            <person name="Zabarovsky E."/>
            <person name="Zhu S."/>
            <person name="Zimmer A."/>
            <person name="Hide W."/>
            <person name="Bult C."/>
            <person name="Grimmond S.M."/>
            <person name="Teasdale R.D."/>
            <person name="Liu E.T."/>
            <person name="Brusic V."/>
            <person name="Quackenbush J."/>
            <person name="Wahlestedt C."/>
            <person name="Mattick J.S."/>
            <person name="Hume D.A."/>
            <person name="Kai C."/>
            <person name="Sasaki D."/>
            <person name="Tomaru Y."/>
            <person name="Fukuda S."/>
            <person name="Kanamori-Katayama M."/>
            <person name="Suzuki M."/>
            <person name="Aoki J."/>
            <person name="Arakawa T."/>
            <person name="Iida J."/>
            <person name="Imamura K."/>
            <person name="Itoh M."/>
            <person name="Kato T."/>
            <person name="Kawaji H."/>
            <person name="Kawagashira N."/>
            <person name="Kawashima T."/>
            <person name="Kojima M."/>
            <person name="Kondo S."/>
            <person name="Konno H."/>
            <person name="Nakano K."/>
            <person name="Ninomiya N."/>
            <person name="Nishio T."/>
            <person name="Okada M."/>
            <person name="Plessy C."/>
            <person name="Shibata K."/>
            <person name="Shiraki T."/>
            <person name="Suzuki S."/>
            <person name="Tagami M."/>
            <person name="Waki K."/>
            <person name="Watahiki A."/>
            <person name="Okamura-Oho Y."/>
            <person name="Suzuki H."/>
            <person name="Kawai J."/>
            <person name="Hayashizaki Y."/>
        </authorList>
    </citation>
    <scope>NUCLEOTIDE SEQUENCE [LARGE SCALE MRNA]</scope>
    <source>
        <strain>C57BL/6J</strain>
        <tissue>Corpora quadrigemina</tissue>
    </source>
</reference>
<reference key="3">
    <citation type="journal article" date="2009" name="PLoS Biol.">
        <title>Lineage-specific biology revealed by a finished genome assembly of the mouse.</title>
        <authorList>
            <person name="Church D.M."/>
            <person name="Goodstadt L."/>
            <person name="Hillier L.W."/>
            <person name="Zody M.C."/>
            <person name="Goldstein S."/>
            <person name="She X."/>
            <person name="Bult C.J."/>
            <person name="Agarwala R."/>
            <person name="Cherry J.L."/>
            <person name="DiCuccio M."/>
            <person name="Hlavina W."/>
            <person name="Kapustin Y."/>
            <person name="Meric P."/>
            <person name="Maglott D."/>
            <person name="Birtle Z."/>
            <person name="Marques A.C."/>
            <person name="Graves T."/>
            <person name="Zhou S."/>
            <person name="Teague B."/>
            <person name="Potamousis K."/>
            <person name="Churas C."/>
            <person name="Place M."/>
            <person name="Herschleb J."/>
            <person name="Runnheim R."/>
            <person name="Forrest D."/>
            <person name="Amos-Landgraf J."/>
            <person name="Schwartz D.C."/>
            <person name="Cheng Z."/>
            <person name="Lindblad-Toh K."/>
            <person name="Eichler E.E."/>
            <person name="Ponting C.P."/>
        </authorList>
    </citation>
    <scope>NUCLEOTIDE SEQUENCE [LARGE SCALE GENOMIC DNA]</scope>
    <source>
        <strain>C57BL/6J</strain>
    </source>
</reference>
<reference key="4">
    <citation type="journal article" date="2004" name="Genome Res.">
        <title>The status, quality, and expansion of the NIH full-length cDNA project: the Mammalian Gene Collection (MGC).</title>
        <authorList>
            <consortium name="The MGC Project Team"/>
        </authorList>
    </citation>
    <scope>NUCLEOTIDE SEQUENCE [LARGE SCALE MRNA]</scope>
</reference>
<reference key="5">
    <citation type="submission" date="2001-06" db="EMBL/GenBank/DDBJ databases">
        <title>Cloning of mouse orexin receptors.</title>
        <authorList>
            <person name="Szendro P.I."/>
            <person name="Maevers K."/>
            <person name="Eichele G."/>
        </authorList>
    </citation>
    <scope>NUCLEOTIDE SEQUENCE [MRNA] OF 134-393</scope>
    <source>
        <strain>C57BL/6J</strain>
    </source>
</reference>
<reference key="6">
    <citation type="journal article" date="2003" name="Proc. Natl. Acad. Sci. U.S.A.">
        <title>The G protein-coupled receptor repertoires of human and mouse.</title>
        <authorList>
            <person name="Vassilatis D.K."/>
            <person name="Hohmann J.G."/>
            <person name="Zeng H."/>
            <person name="Li F."/>
            <person name="Ranchalis J.E."/>
            <person name="Mortrud M.T."/>
            <person name="Brown A."/>
            <person name="Rodriguez S.S."/>
            <person name="Weller J.R."/>
            <person name="Wright A.C."/>
            <person name="Bergmann J.E."/>
            <person name="Gaitanaris G.A."/>
        </authorList>
    </citation>
    <scope>NUCLEOTIDE SEQUENCE [LARGE SCALE MRNA] OF 141-339</scope>
</reference>
<reference key="7">
    <citation type="journal article" date="2001" name="Bioessays">
        <title>Hypocretin/orexin, sleep and narcolepsy.</title>
        <authorList>
            <person name="Hungs M."/>
            <person name="Mignot E."/>
        </authorList>
    </citation>
    <scope>REVIEW</scope>
</reference>
<reference key="8">
    <citation type="journal article" date="2001" name="Annu. Rev. Neurosci.">
        <title>To eat or to sleep? Orexin in the regulation of feeding and wakefulness.</title>
        <authorList>
            <person name="Willie J.T."/>
            <person name="Chemelli R.M."/>
            <person name="Sinton C.M."/>
            <person name="Yanagisawa M."/>
        </authorList>
    </citation>
    <scope>REVIEW</scope>
</reference>
<evidence type="ECO:0000250" key="1">
    <source>
        <dbReference type="UniProtKB" id="O43613"/>
    </source>
</evidence>
<evidence type="ECO:0000255" key="2"/>
<evidence type="ECO:0000255" key="3">
    <source>
        <dbReference type="PROSITE-ProRule" id="PRU00521"/>
    </source>
</evidence>
<evidence type="ECO:0000256" key="4">
    <source>
        <dbReference type="SAM" id="MobiDB-lite"/>
    </source>
</evidence>
<evidence type="ECO:0000269" key="5">
    <source>
    </source>
</evidence>
<evidence type="ECO:0000305" key="6"/>
<evidence type="ECO:0000305" key="7">
    <source>
    </source>
</evidence>
<evidence type="ECO:0000305" key="8">
    <source>
    </source>
</evidence>
<evidence type="ECO:0000312" key="9">
    <source>
        <dbReference type="MGI" id="MGI:2385650"/>
    </source>
</evidence>
<proteinExistence type="evidence at transcript level"/>
<comment type="function">
    <text evidence="1">Moderately selective excitatory receptor for orexin-A and, with a lower affinity, for orexin-B neuropeptide. Triggers an increase in cytoplasmic Ca(2+) levels in response to orexin-A binding.</text>
</comment>
<comment type="subcellular location">
    <subcellularLocation>
        <location evidence="1">Cell membrane</location>
        <topology evidence="1">Multi-pass membrane protein</topology>
    </subcellularLocation>
</comment>
<comment type="tissue specificity">
    <text evidence="5">Widely expressed.</text>
</comment>
<comment type="domain">
    <text evidence="1">The N-terminal region is required for orexin signaling.</text>
</comment>
<comment type="similarity">
    <text evidence="3">Belongs to the G-protein coupled receptor 1 family.</text>
</comment>
<keyword id="KW-1003">Cell membrane</keyword>
<keyword id="KW-1015">Disulfide bond</keyword>
<keyword id="KW-0297">G-protein coupled receptor</keyword>
<keyword id="KW-0325">Glycoprotein</keyword>
<keyword id="KW-0472">Membrane</keyword>
<keyword id="KW-0675">Receptor</keyword>
<keyword id="KW-1185">Reference proteome</keyword>
<keyword id="KW-0807">Transducer</keyword>
<keyword id="KW-0812">Transmembrane</keyword>
<keyword id="KW-1133">Transmembrane helix</keyword>
<sequence length="416" mass="46781">MEPSATPGAQPGVPTSSGEPFHLPPDYEDEFLRYLWRDYLYPKQYEWVLIAAYVAVFLIALVGNTLVCLAVWRNHHMRTVTNYFIVNLSLADVLVTAICLPASLLVDITESWLFGQALCKVIPYLQAVSVSVAVLTLSFIALDRWYAICHPLLFKSTARRARGSILGIWAVSLAVMVPQAAVMECSSVLPELANRTRLFSVCDEHWADELYPKIYHSCFFIVTYLAPLGLMAMAYFQIFRKLWGRQIPGTTSALVRNWKRPSEQLEAQHQGLCTEPQPRARAFLAEVKQMRARRKTAKMLMVVLLVFALCYLPISVLNVLKRVFGMFRQASDREAVYACFTFSHWLVYANSAANPIIYNFLSGKFREQFKAAFSCCLPGLGPGSSARHKSLSLQSRCSVSKVSEHVVLTTVTTVLS</sequence>
<organism>
    <name type="scientific">Mus musculus</name>
    <name type="common">Mouse</name>
    <dbReference type="NCBI Taxonomy" id="10090"/>
    <lineage>
        <taxon>Eukaryota</taxon>
        <taxon>Metazoa</taxon>
        <taxon>Chordata</taxon>
        <taxon>Craniata</taxon>
        <taxon>Vertebrata</taxon>
        <taxon>Euteleostomi</taxon>
        <taxon>Mammalia</taxon>
        <taxon>Eutheria</taxon>
        <taxon>Euarchontoglires</taxon>
        <taxon>Glires</taxon>
        <taxon>Rodentia</taxon>
        <taxon>Myomorpha</taxon>
        <taxon>Muroidea</taxon>
        <taxon>Muridae</taxon>
        <taxon>Murinae</taxon>
        <taxon>Mus</taxon>
        <taxon>Mus</taxon>
    </lineage>
</organism>
<name>OX1R_MOUSE</name>
<accession>P58307</accession>
<accession>Q0VDP5</accession>
<accession>Q3USS9</accession>
<accession>Q6VNS3</accession>
<accession>Q80T45</accession>